<proteinExistence type="inferred from homology"/>
<feature type="chain" id="PRO_0000226898" description="ATP synthase subunit b, chloroplastic">
    <location>
        <begin position="1"/>
        <end position="183"/>
    </location>
</feature>
<feature type="transmembrane region" description="Helical" evidence="1">
    <location>
        <begin position="25"/>
        <end position="45"/>
    </location>
</feature>
<organism>
    <name type="scientific">Saccharum hybrid</name>
    <name type="common">Sugarcane</name>
    <dbReference type="NCBI Taxonomy" id="15819"/>
    <lineage>
        <taxon>Eukaryota</taxon>
        <taxon>Viridiplantae</taxon>
        <taxon>Streptophyta</taxon>
        <taxon>Embryophyta</taxon>
        <taxon>Tracheophyta</taxon>
        <taxon>Spermatophyta</taxon>
        <taxon>Magnoliopsida</taxon>
        <taxon>Liliopsida</taxon>
        <taxon>Poales</taxon>
        <taxon>Poaceae</taxon>
        <taxon>PACMAD clade</taxon>
        <taxon>Panicoideae</taxon>
        <taxon>Andropogonodae</taxon>
        <taxon>Andropogoneae</taxon>
        <taxon>Saccharinae</taxon>
        <taxon>Saccharum</taxon>
    </lineage>
</organism>
<keyword id="KW-0066">ATP synthesis</keyword>
<keyword id="KW-0067">ATP-binding</keyword>
<keyword id="KW-0138">CF(0)</keyword>
<keyword id="KW-0150">Chloroplast</keyword>
<keyword id="KW-0375">Hydrogen ion transport</keyword>
<keyword id="KW-0406">Ion transport</keyword>
<keyword id="KW-0472">Membrane</keyword>
<keyword id="KW-0547">Nucleotide-binding</keyword>
<keyword id="KW-0934">Plastid</keyword>
<keyword id="KW-0793">Thylakoid</keyword>
<keyword id="KW-0812">Transmembrane</keyword>
<keyword id="KW-1133">Transmembrane helix</keyword>
<keyword id="KW-0813">Transport</keyword>
<comment type="function">
    <text evidence="1">F(1)F(0) ATP synthase produces ATP from ADP in the presence of a proton or sodium gradient. F-type ATPases consist of two structural domains, F(1) containing the extramembraneous catalytic core and F(0) containing the membrane proton channel, linked together by a central stalk and a peripheral stalk. During catalysis, ATP synthesis in the catalytic domain of F(1) is coupled via a rotary mechanism of the central stalk subunits to proton translocation.</text>
</comment>
<comment type="function">
    <text evidence="1">Component of the F(0) channel, it forms part of the peripheral stalk, linking F(1) to F(0).</text>
</comment>
<comment type="subunit">
    <text evidence="1">F-type ATPases have 2 components, F(1) - the catalytic core - and F(0) - the membrane proton channel. F(1) has five subunits: alpha(3), beta(3), gamma(1), delta(1), epsilon(1). F(0) has four main subunits: a(1), b(1), b'(1) and c(10-14). The alpha and beta chains form an alternating ring which encloses part of the gamma chain. F(1) is attached to F(0) by a central stalk formed by the gamma and epsilon chains, while a peripheral stalk is formed by the delta, b and b' chains.</text>
</comment>
<comment type="subcellular location">
    <subcellularLocation>
        <location evidence="1">Plastid</location>
        <location evidence="1">Chloroplast thylakoid membrane</location>
        <topology evidence="1">Single-pass membrane protein</topology>
    </subcellularLocation>
</comment>
<comment type="miscellaneous">
    <text>In plastids the F-type ATPase is also known as CF(1)CF(0).</text>
</comment>
<comment type="similarity">
    <text evidence="1">Belongs to the ATPase B chain family.</text>
</comment>
<geneLocation type="chloroplast"/>
<accession>P0C156</accession>
<reference key="1">
    <citation type="journal article" date="2004" name="Curr. Genet.">
        <title>Structural features and transcript-editing analysis of sugarcane (Saccharum officinarum L.) chloroplast genome.</title>
        <authorList>
            <person name="Calsa T. Jr."/>
            <person name="Carraro D.M."/>
            <person name="Benatti M.R."/>
            <person name="Barbosa A.C."/>
            <person name="Kitajima J.P."/>
            <person name="Carrer H."/>
        </authorList>
    </citation>
    <scope>NUCLEOTIDE SEQUENCE [LARGE SCALE GENOMIC DNA]</scope>
    <source>
        <strain>cv. SP-80-3280</strain>
    </source>
</reference>
<gene>
    <name evidence="1" type="primary">atpF</name>
    <name type="ordered locus">PS112</name>
</gene>
<sequence>MKNVTHSFVFLAHWPFAGSFGLNTDILATNLINLTVVVGVLIFFGKGVLKDLLDNRKQRILSTIRNSEELRRGTLEQLEKARIRLQKVELEADEYRMNGYSEIEREKENLINATSISLEQLEKSKNETLYFEKQRAMNQVRQRVFQQAVQGALGTLNSCLNTELHFRTIRANIGILGAIEWKR</sequence>
<protein>
    <recommendedName>
        <fullName evidence="1">ATP synthase subunit b, chloroplastic</fullName>
    </recommendedName>
    <alternativeName>
        <fullName evidence="1">ATP synthase F(0) sector subunit b</fullName>
    </alternativeName>
    <alternativeName>
        <fullName evidence="1">ATPase subunit I</fullName>
    </alternativeName>
</protein>
<name>ATPF_SACHY</name>
<evidence type="ECO:0000255" key="1">
    <source>
        <dbReference type="HAMAP-Rule" id="MF_01398"/>
    </source>
</evidence>
<dbReference type="EMBL" id="AE009947">
    <property type="status" value="NOT_ANNOTATED_CDS"/>
    <property type="molecule type" value="Genomic_DNA"/>
</dbReference>
<dbReference type="SMR" id="P0C156"/>
<dbReference type="GO" id="GO:0009535">
    <property type="term" value="C:chloroplast thylakoid membrane"/>
    <property type="evidence" value="ECO:0007669"/>
    <property type="project" value="UniProtKB-SubCell"/>
</dbReference>
<dbReference type="GO" id="GO:0045259">
    <property type="term" value="C:proton-transporting ATP synthase complex"/>
    <property type="evidence" value="ECO:0007669"/>
    <property type="project" value="UniProtKB-KW"/>
</dbReference>
<dbReference type="GO" id="GO:0005524">
    <property type="term" value="F:ATP binding"/>
    <property type="evidence" value="ECO:0007669"/>
    <property type="project" value="UniProtKB-KW"/>
</dbReference>
<dbReference type="GO" id="GO:0046933">
    <property type="term" value="F:proton-transporting ATP synthase activity, rotational mechanism"/>
    <property type="evidence" value="ECO:0007669"/>
    <property type="project" value="UniProtKB-UniRule"/>
</dbReference>
<dbReference type="CDD" id="cd06503">
    <property type="entry name" value="ATP-synt_Fo_b"/>
    <property type="match status" value="1"/>
</dbReference>
<dbReference type="HAMAP" id="MF_01398">
    <property type="entry name" value="ATP_synth_b_bprime"/>
    <property type="match status" value="1"/>
</dbReference>
<dbReference type="InterPro" id="IPR002146">
    <property type="entry name" value="ATP_synth_b/b'su_bac/chlpt"/>
</dbReference>
<dbReference type="PANTHER" id="PTHR34264">
    <property type="entry name" value="ATP SYNTHASE SUBUNIT B, CHLOROPLASTIC"/>
    <property type="match status" value="1"/>
</dbReference>
<dbReference type="PANTHER" id="PTHR34264:SF8">
    <property type="entry name" value="ATP SYNTHASE SUBUNIT B, CHLOROPLASTIC"/>
    <property type="match status" value="1"/>
</dbReference>
<dbReference type="Pfam" id="PF00430">
    <property type="entry name" value="ATP-synt_B"/>
    <property type="match status" value="1"/>
</dbReference>